<accession>C1H741</accession>
<protein>
    <recommendedName>
        <fullName>ATPase synthesis protein 25, mitochondrial</fullName>
    </recommendedName>
</protein>
<sequence length="728" mass="81558">MSRILLRGIQCHACRQNVIRSFVSASGVTITPPAIGSVSTFNPHLSGSFPTRRVELFSSKAKDDSSLAADSVSENSAAQEDSYPQENSQQHVPWYLQEELQEMAPHPMRQQQELPPLPENPPPILKVLLEYISADIGLDNLNLLDLRALDPPPALGANLIMIFGTARGVKHLNVSADRFCRWLRTTYKLRPDADGLLGRNELKIKLRRKARRAKLAKRAGSTLTQPDDGITTGWICVDVGIVEGGQLSKPEGVQKAGFVGFGTVVQGTRIVVQMMTEEKREEIDLESLWRQTLEENSMENQDLPKPQAEEPPQVVGFTHEPSTITTADFSHRISQTPPIRANYEQLRSISTSLHRLRDNRGPATDFVPTGTAAATKSAESNSSQVSLPSLFNYLSNLEPDKAIDELGQGVDDRTSTGFLQKFYEELARAAPQIASTQRLELMCTAILLQHSGYRKDNLFQAFKEHIVSNYPLPRALVLRLLDALLAFKADPNSNPPRLRLPSADMELALQLIENAALRGANIFHADFLIRVFLAVSYRTRVYAVKPENLHSAAITGNRIPVSIDEFESVQRIQTRLASIIRAAKVALGEKEYLDILRVHSNQGEYAKFWNAWGEVSLQGIHRGKSFYLFLFDLHAELGDWQQSRTTLLNCIPMMWREDPPIFFDAELAEAVSKCIALAYPDIDDRVQQNLPALIVKTWHRCRIAIQNQKMSERKERLIQAELGTLPEN</sequence>
<feature type="transit peptide" description="Mitochondrion" evidence="2">
    <location>
        <begin position="1"/>
        <end position="29"/>
    </location>
</feature>
<feature type="chain" id="PRO_0000404478" description="ATPase synthesis protein 25, mitochondrial">
    <location>
        <begin position="30"/>
        <end position="728"/>
    </location>
</feature>
<feature type="region of interest" description="Disordered" evidence="3">
    <location>
        <begin position="65"/>
        <end position="89"/>
    </location>
</feature>
<feature type="compositionally biased region" description="Polar residues" evidence="3">
    <location>
        <begin position="74"/>
        <end position="89"/>
    </location>
</feature>
<comment type="function">
    <text evidence="1">Probable mitochondrial mRNA stabilization factor.</text>
</comment>
<comment type="subcellular location">
    <subcellularLocation>
        <location evidence="1">Mitochondrion inner membrane</location>
        <topology evidence="1">Peripheral membrane protein</topology>
        <orientation evidence="1">Matrix side</orientation>
    </subcellularLocation>
</comment>
<comment type="similarity">
    <text evidence="4">Belongs to the ATP25 family.</text>
</comment>
<proteinExistence type="inferred from homology"/>
<reference key="1">
    <citation type="journal article" date="2011" name="PLoS Genet.">
        <title>Comparative genomic analysis of human fungal pathogens causing paracoccidioidomycosis.</title>
        <authorList>
            <person name="Desjardins C.A."/>
            <person name="Champion M.D."/>
            <person name="Holder J.W."/>
            <person name="Muszewska A."/>
            <person name="Goldberg J."/>
            <person name="Bailao A.M."/>
            <person name="Brigido M.M."/>
            <person name="Ferreira M.E."/>
            <person name="Garcia A.M."/>
            <person name="Grynberg M."/>
            <person name="Gujja S."/>
            <person name="Heiman D.I."/>
            <person name="Henn M.R."/>
            <person name="Kodira C.D."/>
            <person name="Leon-Narvaez H."/>
            <person name="Longo L.V.G."/>
            <person name="Ma L.-J."/>
            <person name="Malavazi I."/>
            <person name="Matsuo A.L."/>
            <person name="Morais F.V."/>
            <person name="Pereira M."/>
            <person name="Rodriguez-Brito S."/>
            <person name="Sakthikumar S."/>
            <person name="Salem-Izacc S.M."/>
            <person name="Sykes S.M."/>
            <person name="Teixeira M.M."/>
            <person name="Vallejo M.C."/>
            <person name="Walter M.E."/>
            <person name="Yandava C."/>
            <person name="Young S."/>
            <person name="Zeng Q."/>
            <person name="Zucker J."/>
            <person name="Felipe M.S."/>
            <person name="Goldman G.H."/>
            <person name="Haas B.J."/>
            <person name="McEwen J.G."/>
            <person name="Nino-Vega G."/>
            <person name="Puccia R."/>
            <person name="San-Blas G."/>
            <person name="Soares C.M."/>
            <person name="Birren B.W."/>
            <person name="Cuomo C.A."/>
        </authorList>
    </citation>
    <scope>NUCLEOTIDE SEQUENCE [LARGE SCALE GENOMIC DNA]</scope>
    <source>
        <strain>ATCC MYA-826 / Pb01</strain>
    </source>
</reference>
<keyword id="KW-0472">Membrane</keyword>
<keyword id="KW-0496">Mitochondrion</keyword>
<keyword id="KW-0999">Mitochondrion inner membrane</keyword>
<keyword id="KW-1185">Reference proteome</keyword>
<keyword id="KW-0809">Transit peptide</keyword>
<organism>
    <name type="scientific">Paracoccidioides lutzii (strain ATCC MYA-826 / Pb01)</name>
    <name type="common">Paracoccidioides brasiliensis</name>
    <dbReference type="NCBI Taxonomy" id="502779"/>
    <lineage>
        <taxon>Eukaryota</taxon>
        <taxon>Fungi</taxon>
        <taxon>Dikarya</taxon>
        <taxon>Ascomycota</taxon>
        <taxon>Pezizomycotina</taxon>
        <taxon>Eurotiomycetes</taxon>
        <taxon>Eurotiomycetidae</taxon>
        <taxon>Onygenales</taxon>
        <taxon>Ajellomycetaceae</taxon>
        <taxon>Paracoccidioides</taxon>
    </lineage>
</organism>
<dbReference type="EMBL" id="KN294010">
    <property type="protein sequence ID" value="EEH35535.1"/>
    <property type="molecule type" value="Genomic_DNA"/>
</dbReference>
<dbReference type="RefSeq" id="XP_002791412.1">
    <property type="nucleotide sequence ID" value="XM_002791366.2"/>
</dbReference>
<dbReference type="SMR" id="C1H741"/>
<dbReference type="STRING" id="502779.C1H741"/>
<dbReference type="GeneID" id="9094634"/>
<dbReference type="KEGG" id="pbl:PAAG_06582"/>
<dbReference type="VEuPathDB" id="FungiDB:PAAG_06582"/>
<dbReference type="eggNOG" id="ENOG502S5IB">
    <property type="taxonomic scope" value="Eukaryota"/>
</dbReference>
<dbReference type="HOGENOM" id="CLU_016140_0_0_1"/>
<dbReference type="OMA" id="CLSSWVP"/>
<dbReference type="OrthoDB" id="107372at2759"/>
<dbReference type="Proteomes" id="UP000002059">
    <property type="component" value="Partially assembled WGS sequence"/>
</dbReference>
<dbReference type="GO" id="GO:0005743">
    <property type="term" value="C:mitochondrial inner membrane"/>
    <property type="evidence" value="ECO:0007669"/>
    <property type="project" value="UniProtKB-SubCell"/>
</dbReference>
<dbReference type="GO" id="GO:0140053">
    <property type="term" value="P:mitochondrial gene expression"/>
    <property type="evidence" value="ECO:0007669"/>
    <property type="project" value="InterPro"/>
</dbReference>
<dbReference type="GO" id="GO:0048255">
    <property type="term" value="P:mRNA stabilization"/>
    <property type="evidence" value="ECO:0007669"/>
    <property type="project" value="TreeGrafter"/>
</dbReference>
<dbReference type="FunFam" id="3.30.460.10:FF:000044">
    <property type="entry name" value="ATPase synthesis protein 25, mitochondrial"/>
    <property type="match status" value="1"/>
</dbReference>
<dbReference type="Gene3D" id="3.30.460.10">
    <property type="entry name" value="Beta Polymerase, domain 2"/>
    <property type="match status" value="1"/>
</dbReference>
<dbReference type="InterPro" id="IPR040152">
    <property type="entry name" value="Atp25"/>
</dbReference>
<dbReference type="InterPro" id="IPR043519">
    <property type="entry name" value="NT_sf"/>
</dbReference>
<dbReference type="PANTHER" id="PTHR28087">
    <property type="entry name" value="ATPASE SYNTHESIS PROTEIN 25, MITOCHONDRIAL"/>
    <property type="match status" value="1"/>
</dbReference>
<dbReference type="PANTHER" id="PTHR28087:SF1">
    <property type="entry name" value="ATPASE SYNTHESIS PROTEIN 25, MITOCHONDRIAL"/>
    <property type="match status" value="1"/>
</dbReference>
<gene>
    <name type="primary">ATP25</name>
    <name type="ORF">PAAG_06582</name>
</gene>
<evidence type="ECO:0000250" key="1"/>
<evidence type="ECO:0000255" key="2"/>
<evidence type="ECO:0000256" key="3">
    <source>
        <dbReference type="SAM" id="MobiDB-lite"/>
    </source>
</evidence>
<evidence type="ECO:0000305" key="4"/>
<name>ATP25_PARBA</name>